<dbReference type="EC" id="1.14.11.-" evidence="1"/>
<dbReference type="EMBL" id="AP009384">
    <property type="protein sequence ID" value="BAF89751.1"/>
    <property type="molecule type" value="Genomic_DNA"/>
</dbReference>
<dbReference type="RefSeq" id="WP_012172276.1">
    <property type="nucleotide sequence ID" value="NC_009937.1"/>
</dbReference>
<dbReference type="SMR" id="A8INH8"/>
<dbReference type="STRING" id="438753.AZC_3753"/>
<dbReference type="KEGG" id="azc:AZC_3753"/>
<dbReference type="eggNOG" id="COG3128">
    <property type="taxonomic scope" value="Bacteria"/>
</dbReference>
<dbReference type="HOGENOM" id="CLU_106663_0_0_5"/>
<dbReference type="Proteomes" id="UP000000270">
    <property type="component" value="Chromosome"/>
</dbReference>
<dbReference type="GO" id="GO:0016706">
    <property type="term" value="F:2-oxoglutarate-dependent dioxygenase activity"/>
    <property type="evidence" value="ECO:0007669"/>
    <property type="project" value="UniProtKB-UniRule"/>
</dbReference>
<dbReference type="GO" id="GO:0005506">
    <property type="term" value="F:iron ion binding"/>
    <property type="evidence" value="ECO:0007669"/>
    <property type="project" value="UniProtKB-UniRule"/>
</dbReference>
<dbReference type="GO" id="GO:0031418">
    <property type="term" value="F:L-ascorbic acid binding"/>
    <property type="evidence" value="ECO:0007669"/>
    <property type="project" value="UniProtKB-KW"/>
</dbReference>
<dbReference type="GO" id="GO:0006974">
    <property type="term" value="P:DNA damage response"/>
    <property type="evidence" value="ECO:0007669"/>
    <property type="project" value="TreeGrafter"/>
</dbReference>
<dbReference type="GO" id="GO:0006879">
    <property type="term" value="P:intracellular iron ion homeostasis"/>
    <property type="evidence" value="ECO:0007669"/>
    <property type="project" value="TreeGrafter"/>
</dbReference>
<dbReference type="Gene3D" id="2.60.120.620">
    <property type="entry name" value="q2cbj1_9rhob like domain"/>
    <property type="match status" value="1"/>
</dbReference>
<dbReference type="Gene3D" id="4.10.860.20">
    <property type="entry name" value="Rabenosyn, Rab binding domain"/>
    <property type="match status" value="1"/>
</dbReference>
<dbReference type="HAMAP" id="MF_00657">
    <property type="entry name" value="Hydroxyl_YbiX"/>
    <property type="match status" value="1"/>
</dbReference>
<dbReference type="InterPro" id="IPR005123">
    <property type="entry name" value="Oxoglu/Fe-dep_dioxygenase_dom"/>
</dbReference>
<dbReference type="InterPro" id="IPR041097">
    <property type="entry name" value="PKHD_C"/>
</dbReference>
<dbReference type="InterPro" id="IPR023550">
    <property type="entry name" value="PKHD_hydroxylase"/>
</dbReference>
<dbReference type="InterPro" id="IPR006620">
    <property type="entry name" value="Pro_4_hyd_alph"/>
</dbReference>
<dbReference type="InterPro" id="IPR044862">
    <property type="entry name" value="Pro_4_hyd_alph_FE2OG_OXY"/>
</dbReference>
<dbReference type="NCBIfam" id="NF003973">
    <property type="entry name" value="PRK05467.1-2"/>
    <property type="match status" value="1"/>
</dbReference>
<dbReference type="NCBIfam" id="NF003974">
    <property type="entry name" value="PRK05467.1-3"/>
    <property type="match status" value="1"/>
</dbReference>
<dbReference type="NCBIfam" id="NF003975">
    <property type="entry name" value="PRK05467.1-4"/>
    <property type="match status" value="1"/>
</dbReference>
<dbReference type="PANTHER" id="PTHR41536">
    <property type="entry name" value="PKHD-TYPE HYDROXYLASE YBIX"/>
    <property type="match status" value="1"/>
</dbReference>
<dbReference type="PANTHER" id="PTHR41536:SF1">
    <property type="entry name" value="PKHD-TYPE HYDROXYLASE YBIX"/>
    <property type="match status" value="1"/>
</dbReference>
<dbReference type="Pfam" id="PF13640">
    <property type="entry name" value="2OG-FeII_Oxy_3"/>
    <property type="match status" value="1"/>
</dbReference>
<dbReference type="Pfam" id="PF18331">
    <property type="entry name" value="PKHD_C"/>
    <property type="match status" value="1"/>
</dbReference>
<dbReference type="SMART" id="SM00702">
    <property type="entry name" value="P4Hc"/>
    <property type="match status" value="1"/>
</dbReference>
<dbReference type="PROSITE" id="PS51471">
    <property type="entry name" value="FE2OG_OXY"/>
    <property type="match status" value="1"/>
</dbReference>
<protein>
    <recommendedName>
        <fullName evidence="1">PKHD-type hydroxylase AZC_3753</fullName>
        <ecNumber evidence="1">1.14.11.-</ecNumber>
    </recommendedName>
</protein>
<feature type="chain" id="PRO_1000072699" description="PKHD-type hydroxylase AZC_3753">
    <location>
        <begin position="1"/>
        <end position="226"/>
    </location>
</feature>
<feature type="domain" description="Fe2OG dioxygenase" evidence="1">
    <location>
        <begin position="78"/>
        <end position="178"/>
    </location>
</feature>
<feature type="binding site" evidence="1">
    <location>
        <position position="96"/>
    </location>
    <ligand>
        <name>Fe cation</name>
        <dbReference type="ChEBI" id="CHEBI:24875"/>
    </ligand>
</feature>
<feature type="binding site" evidence="1">
    <location>
        <position position="98"/>
    </location>
    <ligand>
        <name>Fe cation</name>
        <dbReference type="ChEBI" id="CHEBI:24875"/>
    </ligand>
</feature>
<feature type="binding site" evidence="1">
    <location>
        <position position="159"/>
    </location>
    <ligand>
        <name>Fe cation</name>
        <dbReference type="ChEBI" id="CHEBI:24875"/>
    </ligand>
</feature>
<feature type="binding site" evidence="1">
    <location>
        <position position="169"/>
    </location>
    <ligand>
        <name>2-oxoglutarate</name>
        <dbReference type="ChEBI" id="CHEBI:16810"/>
    </ligand>
</feature>
<comment type="cofactor">
    <cofactor evidence="1">
        <name>Fe(2+)</name>
        <dbReference type="ChEBI" id="CHEBI:29033"/>
    </cofactor>
    <text evidence="1">Binds 1 Fe(2+) ion per subunit.</text>
</comment>
<comment type="cofactor">
    <cofactor evidence="1">
        <name>L-ascorbate</name>
        <dbReference type="ChEBI" id="CHEBI:38290"/>
    </cofactor>
</comment>
<organism>
    <name type="scientific">Azorhizobium caulinodans (strain ATCC 43989 / DSM 5975 / JCM 20966 / LMG 6465 / NBRC 14845 / NCIMB 13405 / ORS 571)</name>
    <dbReference type="NCBI Taxonomy" id="438753"/>
    <lineage>
        <taxon>Bacteria</taxon>
        <taxon>Pseudomonadati</taxon>
        <taxon>Pseudomonadota</taxon>
        <taxon>Alphaproteobacteria</taxon>
        <taxon>Hyphomicrobiales</taxon>
        <taxon>Xanthobacteraceae</taxon>
        <taxon>Azorhizobium</taxon>
    </lineage>
</organism>
<reference key="1">
    <citation type="submission" date="2007-04" db="EMBL/GenBank/DDBJ databases">
        <title>Complete genome sequence of the nitrogen-fixing bacterium Azorhizobium caulinodans ORS571.</title>
        <authorList>
            <person name="Lee K.B."/>
            <person name="Backer P.D."/>
            <person name="Aono T."/>
            <person name="Liu C.T."/>
            <person name="Suzuki S."/>
            <person name="Suzuki T."/>
            <person name="Kaneko T."/>
            <person name="Yamada M."/>
            <person name="Tabata S."/>
            <person name="Kupfer D.M."/>
            <person name="Najar F.Z."/>
            <person name="Wiley G.B."/>
            <person name="Roe B."/>
            <person name="Binnewies T."/>
            <person name="Ussery D."/>
            <person name="Vereecke D."/>
            <person name="Gevers D."/>
            <person name="Holsters M."/>
            <person name="Oyaizu H."/>
        </authorList>
    </citation>
    <scope>NUCLEOTIDE SEQUENCE [LARGE SCALE GENOMIC DNA]</scope>
    <source>
        <strain>ATCC 43989 / DSM 5975 / JCM 20966 / LMG 6465 / NBRC 14845 / NCIMB 13405 / ORS 571</strain>
    </source>
</reference>
<keyword id="KW-0223">Dioxygenase</keyword>
<keyword id="KW-0408">Iron</keyword>
<keyword id="KW-0479">Metal-binding</keyword>
<keyword id="KW-0560">Oxidoreductase</keyword>
<keyword id="KW-1185">Reference proteome</keyword>
<keyword id="KW-0847">Vitamin C</keyword>
<accession>A8INH8</accession>
<proteinExistence type="inferred from homology"/>
<sequence length="226" mass="24975">MMIHIPKVLTPEQVARCRAVMDAAGWVDGRSTAGAQAVHVKKNLQLPDGSAEARELGEMVRAALQRSALFTSAVLPRRILPPMFNRYDAGMTFGSHVDNAIRFVRDSGEPLRTDVSTTLFLSEPDEYEGGELVVEDTYGAHKVKLPAGDAIVYPATSLHHVTPITRGSRVASFFWTQSLIRDAGQRALLFDMDMAIMRLNQDHPGHISAVQLTGVYHNLLRQWAEV</sequence>
<evidence type="ECO:0000255" key="1">
    <source>
        <dbReference type="HAMAP-Rule" id="MF_00657"/>
    </source>
</evidence>
<gene>
    <name type="ordered locus">AZC_3753</name>
</gene>
<name>Y3753_AZOC5</name>